<dbReference type="EC" id="1.4.3.5" evidence="1"/>
<dbReference type="EMBL" id="CP000526">
    <property type="protein sequence ID" value="ABM51061.1"/>
    <property type="molecule type" value="Genomic_DNA"/>
</dbReference>
<dbReference type="RefSeq" id="WP_004188935.1">
    <property type="nucleotide sequence ID" value="NC_008785.1"/>
</dbReference>
<dbReference type="SMR" id="A1V1A2"/>
<dbReference type="GeneID" id="92978130"/>
<dbReference type="KEGG" id="bmv:BMASAVP1_A0659"/>
<dbReference type="HOGENOM" id="CLU_032263_2_2_4"/>
<dbReference type="UniPathway" id="UPA01068">
    <property type="reaction ID" value="UER00304"/>
</dbReference>
<dbReference type="UniPathway" id="UPA01068">
    <property type="reaction ID" value="UER00305"/>
</dbReference>
<dbReference type="GO" id="GO:0010181">
    <property type="term" value="F:FMN binding"/>
    <property type="evidence" value="ECO:0007669"/>
    <property type="project" value="UniProtKB-UniRule"/>
</dbReference>
<dbReference type="GO" id="GO:0004733">
    <property type="term" value="F:pyridoxamine phosphate oxidase activity"/>
    <property type="evidence" value="ECO:0007669"/>
    <property type="project" value="UniProtKB-UniRule"/>
</dbReference>
<dbReference type="GO" id="GO:0008615">
    <property type="term" value="P:pyridoxine biosynthetic process"/>
    <property type="evidence" value="ECO:0007669"/>
    <property type="project" value="UniProtKB-KW"/>
</dbReference>
<dbReference type="FunFam" id="2.30.110.10:FF:000005">
    <property type="entry name" value="NAD(P)H-hydrate epimerase"/>
    <property type="match status" value="1"/>
</dbReference>
<dbReference type="Gene3D" id="2.30.110.10">
    <property type="entry name" value="Electron Transport, Fmn-binding Protein, Chain A"/>
    <property type="match status" value="1"/>
</dbReference>
<dbReference type="HAMAP" id="MF_01629">
    <property type="entry name" value="PdxH"/>
    <property type="match status" value="1"/>
</dbReference>
<dbReference type="InterPro" id="IPR000659">
    <property type="entry name" value="Pyridox_Oxase"/>
</dbReference>
<dbReference type="InterPro" id="IPR019740">
    <property type="entry name" value="Pyridox_Oxase_CS"/>
</dbReference>
<dbReference type="InterPro" id="IPR011576">
    <property type="entry name" value="Pyridox_Oxase_N"/>
</dbReference>
<dbReference type="InterPro" id="IPR019576">
    <property type="entry name" value="Pyridoxamine_oxidase_dimer_C"/>
</dbReference>
<dbReference type="InterPro" id="IPR012349">
    <property type="entry name" value="Split_barrel_FMN-bd"/>
</dbReference>
<dbReference type="NCBIfam" id="TIGR00558">
    <property type="entry name" value="pdxH"/>
    <property type="match status" value="1"/>
</dbReference>
<dbReference type="NCBIfam" id="NF004231">
    <property type="entry name" value="PRK05679.1"/>
    <property type="match status" value="1"/>
</dbReference>
<dbReference type="PANTHER" id="PTHR10851:SF0">
    <property type="entry name" value="PYRIDOXINE-5'-PHOSPHATE OXIDASE"/>
    <property type="match status" value="1"/>
</dbReference>
<dbReference type="PANTHER" id="PTHR10851">
    <property type="entry name" value="PYRIDOXINE-5-PHOSPHATE OXIDASE"/>
    <property type="match status" value="1"/>
</dbReference>
<dbReference type="Pfam" id="PF10590">
    <property type="entry name" value="PNP_phzG_C"/>
    <property type="match status" value="1"/>
</dbReference>
<dbReference type="Pfam" id="PF01243">
    <property type="entry name" value="PNPOx_N"/>
    <property type="match status" value="1"/>
</dbReference>
<dbReference type="PIRSF" id="PIRSF000190">
    <property type="entry name" value="Pyd_amn-ph_oxd"/>
    <property type="match status" value="1"/>
</dbReference>
<dbReference type="SUPFAM" id="SSF50475">
    <property type="entry name" value="FMN-binding split barrel"/>
    <property type="match status" value="1"/>
</dbReference>
<dbReference type="PROSITE" id="PS01064">
    <property type="entry name" value="PYRIDOX_OXIDASE"/>
    <property type="match status" value="1"/>
</dbReference>
<proteinExistence type="inferred from homology"/>
<organism>
    <name type="scientific">Burkholderia mallei (strain SAVP1)</name>
    <dbReference type="NCBI Taxonomy" id="320388"/>
    <lineage>
        <taxon>Bacteria</taxon>
        <taxon>Pseudomonadati</taxon>
        <taxon>Pseudomonadota</taxon>
        <taxon>Betaproteobacteria</taxon>
        <taxon>Burkholderiales</taxon>
        <taxon>Burkholderiaceae</taxon>
        <taxon>Burkholderia</taxon>
        <taxon>pseudomallei group</taxon>
    </lineage>
</organism>
<reference key="1">
    <citation type="journal article" date="2010" name="Genome Biol. Evol.">
        <title>Continuing evolution of Burkholderia mallei through genome reduction and large-scale rearrangements.</title>
        <authorList>
            <person name="Losada L."/>
            <person name="Ronning C.M."/>
            <person name="DeShazer D."/>
            <person name="Woods D."/>
            <person name="Fedorova N."/>
            <person name="Kim H.S."/>
            <person name="Shabalina S.A."/>
            <person name="Pearson T.R."/>
            <person name="Brinkac L."/>
            <person name="Tan P."/>
            <person name="Nandi T."/>
            <person name="Crabtree J."/>
            <person name="Badger J."/>
            <person name="Beckstrom-Sternberg S."/>
            <person name="Saqib M."/>
            <person name="Schutzer S.E."/>
            <person name="Keim P."/>
            <person name="Nierman W.C."/>
        </authorList>
    </citation>
    <scope>NUCLEOTIDE SEQUENCE [LARGE SCALE GENOMIC DNA]</scope>
    <source>
        <strain>SAVP1</strain>
    </source>
</reference>
<gene>
    <name evidence="1" type="primary">pdxH</name>
    <name type="ordered locus">BMASAVP1_A0659</name>
</gene>
<name>PDXH_BURMS</name>
<protein>
    <recommendedName>
        <fullName evidence="1">Pyridoxine/pyridoxamine 5'-phosphate oxidase</fullName>
        <ecNumber evidence="1">1.4.3.5</ecNumber>
    </recommendedName>
    <alternativeName>
        <fullName evidence="1">PNP/PMP oxidase</fullName>
        <shortName evidence="1">PNPOx</shortName>
    </alternativeName>
    <alternativeName>
        <fullName evidence="1">Pyridoxal 5'-phosphate synthase</fullName>
    </alternativeName>
</protein>
<comment type="function">
    <text evidence="1">Catalyzes the oxidation of either pyridoxine 5'-phosphate (PNP) or pyridoxamine 5'-phosphate (PMP) into pyridoxal 5'-phosphate (PLP).</text>
</comment>
<comment type="catalytic activity">
    <reaction evidence="1">
        <text>pyridoxamine 5'-phosphate + O2 + H2O = pyridoxal 5'-phosphate + H2O2 + NH4(+)</text>
        <dbReference type="Rhea" id="RHEA:15817"/>
        <dbReference type="ChEBI" id="CHEBI:15377"/>
        <dbReference type="ChEBI" id="CHEBI:15379"/>
        <dbReference type="ChEBI" id="CHEBI:16240"/>
        <dbReference type="ChEBI" id="CHEBI:28938"/>
        <dbReference type="ChEBI" id="CHEBI:58451"/>
        <dbReference type="ChEBI" id="CHEBI:597326"/>
        <dbReference type="EC" id="1.4.3.5"/>
    </reaction>
</comment>
<comment type="catalytic activity">
    <reaction evidence="1">
        <text>pyridoxine 5'-phosphate + O2 = pyridoxal 5'-phosphate + H2O2</text>
        <dbReference type="Rhea" id="RHEA:15149"/>
        <dbReference type="ChEBI" id="CHEBI:15379"/>
        <dbReference type="ChEBI" id="CHEBI:16240"/>
        <dbReference type="ChEBI" id="CHEBI:58589"/>
        <dbReference type="ChEBI" id="CHEBI:597326"/>
        <dbReference type="EC" id="1.4.3.5"/>
    </reaction>
</comment>
<comment type="cofactor">
    <cofactor evidence="1">
        <name>FMN</name>
        <dbReference type="ChEBI" id="CHEBI:58210"/>
    </cofactor>
    <text evidence="1">Binds 1 FMN per subunit.</text>
</comment>
<comment type="pathway">
    <text evidence="1">Cofactor metabolism; pyridoxal 5'-phosphate salvage; pyridoxal 5'-phosphate from pyridoxamine 5'-phosphate: step 1/1.</text>
</comment>
<comment type="pathway">
    <text evidence="1">Cofactor metabolism; pyridoxal 5'-phosphate salvage; pyridoxal 5'-phosphate from pyridoxine 5'-phosphate: step 1/1.</text>
</comment>
<comment type="subunit">
    <text evidence="1">Homodimer.</text>
</comment>
<comment type="similarity">
    <text evidence="1">Belongs to the pyridoxamine 5'-phosphate oxidase family.</text>
</comment>
<keyword id="KW-0285">Flavoprotein</keyword>
<keyword id="KW-0288">FMN</keyword>
<keyword id="KW-0560">Oxidoreductase</keyword>
<keyword id="KW-0664">Pyridoxine biosynthesis</keyword>
<sequence length="214" mass="24295">MTTLADLRTNYSRASLDAADVNPNPFVQFDVWFKEALDAQLPEPNTMTLATVDESGRPSARIVLIKGADERGFVFFTNYESRKGRELAHNPNAALLFYWIELERQVRVEGRIEKTSEEESDRYFASRPLGSRIGAWASEQSAVIESRALLEAREKEIGARFGENPPRPPHWGGYRLVPSSIEFWQGRPSRLHDRLLYTRDAASASGWKITRLAP</sequence>
<evidence type="ECO:0000255" key="1">
    <source>
        <dbReference type="HAMAP-Rule" id="MF_01629"/>
    </source>
</evidence>
<accession>A1V1A2</accession>
<feature type="chain" id="PRO_1000069686" description="Pyridoxine/pyridoxamine 5'-phosphate oxidase">
    <location>
        <begin position="1"/>
        <end position="214"/>
    </location>
</feature>
<feature type="binding site" evidence="1">
    <location>
        <begin position="8"/>
        <end position="11"/>
    </location>
    <ligand>
        <name>substrate</name>
    </ligand>
</feature>
<feature type="binding site" evidence="1">
    <location>
        <begin position="61"/>
        <end position="66"/>
    </location>
    <ligand>
        <name>FMN</name>
        <dbReference type="ChEBI" id="CHEBI:58210"/>
    </ligand>
</feature>
<feature type="binding site" evidence="1">
    <location>
        <position position="66"/>
    </location>
    <ligand>
        <name>substrate</name>
    </ligand>
</feature>
<feature type="binding site" evidence="1">
    <location>
        <begin position="76"/>
        <end position="77"/>
    </location>
    <ligand>
        <name>FMN</name>
        <dbReference type="ChEBI" id="CHEBI:58210"/>
    </ligand>
</feature>
<feature type="binding site" evidence="1">
    <location>
        <position position="82"/>
    </location>
    <ligand>
        <name>FMN</name>
        <dbReference type="ChEBI" id="CHEBI:58210"/>
    </ligand>
</feature>
<feature type="binding site" evidence="1">
    <location>
        <position position="83"/>
    </location>
    <ligand>
        <name>FMN</name>
        <dbReference type="ChEBI" id="CHEBI:58210"/>
    </ligand>
</feature>
<feature type="binding site" evidence="1">
    <location>
        <position position="105"/>
    </location>
    <ligand>
        <name>FMN</name>
        <dbReference type="ChEBI" id="CHEBI:58210"/>
    </ligand>
</feature>
<feature type="binding site" evidence="1">
    <location>
        <position position="123"/>
    </location>
    <ligand>
        <name>substrate</name>
    </ligand>
</feature>
<feature type="binding site" evidence="1">
    <location>
        <position position="127"/>
    </location>
    <ligand>
        <name>substrate</name>
    </ligand>
</feature>
<feature type="binding site" evidence="1">
    <location>
        <position position="131"/>
    </location>
    <ligand>
        <name>substrate</name>
    </ligand>
</feature>
<feature type="binding site" evidence="1">
    <location>
        <begin position="140"/>
        <end position="141"/>
    </location>
    <ligand>
        <name>FMN</name>
        <dbReference type="ChEBI" id="CHEBI:58210"/>
    </ligand>
</feature>
<feature type="binding site" evidence="1">
    <location>
        <position position="184"/>
    </location>
    <ligand>
        <name>FMN</name>
        <dbReference type="ChEBI" id="CHEBI:58210"/>
    </ligand>
</feature>
<feature type="binding site" evidence="1">
    <location>
        <begin position="190"/>
        <end position="192"/>
    </location>
    <ligand>
        <name>substrate</name>
    </ligand>
</feature>
<feature type="binding site" evidence="1">
    <location>
        <position position="194"/>
    </location>
    <ligand>
        <name>FMN</name>
        <dbReference type="ChEBI" id="CHEBI:58210"/>
    </ligand>
</feature>